<gene>
    <name evidence="1" type="primary">leuS</name>
    <name type="ordered locus">LEUM_0635</name>
</gene>
<proteinExistence type="inferred from homology"/>
<dbReference type="EC" id="6.1.1.4" evidence="1"/>
<dbReference type="EMBL" id="CP000414">
    <property type="protein sequence ID" value="ABJ61748.1"/>
    <property type="molecule type" value="Genomic_DNA"/>
</dbReference>
<dbReference type="RefSeq" id="WP_011679445.1">
    <property type="nucleotide sequence ID" value="NC_008531.1"/>
</dbReference>
<dbReference type="SMR" id="Q03YH4"/>
<dbReference type="EnsemblBacteria" id="ABJ61748">
    <property type="protein sequence ID" value="ABJ61748"/>
    <property type="gene ID" value="LEUM_0635"/>
</dbReference>
<dbReference type="GeneID" id="29576011"/>
<dbReference type="KEGG" id="lme:LEUM_0635"/>
<dbReference type="eggNOG" id="COG0495">
    <property type="taxonomic scope" value="Bacteria"/>
</dbReference>
<dbReference type="HOGENOM" id="CLU_004427_0_0_9"/>
<dbReference type="Proteomes" id="UP000000362">
    <property type="component" value="Chromosome"/>
</dbReference>
<dbReference type="GO" id="GO:0005829">
    <property type="term" value="C:cytosol"/>
    <property type="evidence" value="ECO:0007669"/>
    <property type="project" value="TreeGrafter"/>
</dbReference>
<dbReference type="GO" id="GO:0002161">
    <property type="term" value="F:aminoacyl-tRNA deacylase activity"/>
    <property type="evidence" value="ECO:0007669"/>
    <property type="project" value="InterPro"/>
</dbReference>
<dbReference type="GO" id="GO:0005524">
    <property type="term" value="F:ATP binding"/>
    <property type="evidence" value="ECO:0007669"/>
    <property type="project" value="UniProtKB-UniRule"/>
</dbReference>
<dbReference type="GO" id="GO:0004823">
    <property type="term" value="F:leucine-tRNA ligase activity"/>
    <property type="evidence" value="ECO:0007669"/>
    <property type="project" value="UniProtKB-UniRule"/>
</dbReference>
<dbReference type="GO" id="GO:0006429">
    <property type="term" value="P:leucyl-tRNA aminoacylation"/>
    <property type="evidence" value="ECO:0007669"/>
    <property type="project" value="UniProtKB-UniRule"/>
</dbReference>
<dbReference type="CDD" id="cd07958">
    <property type="entry name" value="Anticodon_Ia_Leu_BEm"/>
    <property type="match status" value="1"/>
</dbReference>
<dbReference type="CDD" id="cd00812">
    <property type="entry name" value="LeuRS_core"/>
    <property type="match status" value="1"/>
</dbReference>
<dbReference type="FunFam" id="3.10.20.590:FF:000001">
    <property type="entry name" value="Leucine--tRNA ligase"/>
    <property type="match status" value="1"/>
</dbReference>
<dbReference type="FunFam" id="3.40.50.620:FF:000056">
    <property type="entry name" value="Leucine--tRNA ligase"/>
    <property type="match status" value="1"/>
</dbReference>
<dbReference type="FunFam" id="3.40.50.620:FF:000077">
    <property type="entry name" value="Leucine--tRNA ligase"/>
    <property type="match status" value="1"/>
</dbReference>
<dbReference type="FunFam" id="1.10.730.10:FF:000011">
    <property type="entry name" value="Leucine--tRNA ligase chloroplastic/mitochondrial"/>
    <property type="match status" value="1"/>
</dbReference>
<dbReference type="Gene3D" id="3.10.20.590">
    <property type="match status" value="1"/>
</dbReference>
<dbReference type="Gene3D" id="3.40.50.620">
    <property type="entry name" value="HUPs"/>
    <property type="match status" value="2"/>
</dbReference>
<dbReference type="Gene3D" id="1.10.730.10">
    <property type="entry name" value="Isoleucyl-tRNA Synthetase, Domain 1"/>
    <property type="match status" value="1"/>
</dbReference>
<dbReference type="Gene3D" id="3.90.740.10">
    <property type="entry name" value="Valyl/Leucyl/Isoleucyl-tRNA synthetase, editing domain"/>
    <property type="match status" value="1"/>
</dbReference>
<dbReference type="HAMAP" id="MF_00049_B">
    <property type="entry name" value="Leu_tRNA_synth_B"/>
    <property type="match status" value="1"/>
</dbReference>
<dbReference type="InterPro" id="IPR001412">
    <property type="entry name" value="aa-tRNA-synth_I_CS"/>
</dbReference>
<dbReference type="InterPro" id="IPR002300">
    <property type="entry name" value="aa-tRNA-synth_Ia"/>
</dbReference>
<dbReference type="InterPro" id="IPR002302">
    <property type="entry name" value="Leu-tRNA-ligase"/>
</dbReference>
<dbReference type="InterPro" id="IPR025709">
    <property type="entry name" value="Leu_tRNA-synth_edit"/>
</dbReference>
<dbReference type="InterPro" id="IPR013155">
    <property type="entry name" value="M/V/L/I-tRNA-synth_anticd-bd"/>
</dbReference>
<dbReference type="InterPro" id="IPR015413">
    <property type="entry name" value="Methionyl/Leucyl_tRNA_Synth"/>
</dbReference>
<dbReference type="InterPro" id="IPR014729">
    <property type="entry name" value="Rossmann-like_a/b/a_fold"/>
</dbReference>
<dbReference type="InterPro" id="IPR009080">
    <property type="entry name" value="tRNAsynth_Ia_anticodon-bd"/>
</dbReference>
<dbReference type="InterPro" id="IPR009008">
    <property type="entry name" value="Val/Leu/Ile-tRNA-synth_edit"/>
</dbReference>
<dbReference type="NCBIfam" id="TIGR00396">
    <property type="entry name" value="leuS_bact"/>
    <property type="match status" value="1"/>
</dbReference>
<dbReference type="PANTHER" id="PTHR43740:SF2">
    <property type="entry name" value="LEUCINE--TRNA LIGASE, MITOCHONDRIAL"/>
    <property type="match status" value="1"/>
</dbReference>
<dbReference type="PANTHER" id="PTHR43740">
    <property type="entry name" value="LEUCYL-TRNA SYNTHETASE"/>
    <property type="match status" value="1"/>
</dbReference>
<dbReference type="Pfam" id="PF08264">
    <property type="entry name" value="Anticodon_1"/>
    <property type="match status" value="1"/>
</dbReference>
<dbReference type="Pfam" id="PF00133">
    <property type="entry name" value="tRNA-synt_1"/>
    <property type="match status" value="1"/>
</dbReference>
<dbReference type="Pfam" id="PF13603">
    <property type="entry name" value="tRNA-synt_1_2"/>
    <property type="match status" value="1"/>
</dbReference>
<dbReference type="Pfam" id="PF09334">
    <property type="entry name" value="tRNA-synt_1g"/>
    <property type="match status" value="1"/>
</dbReference>
<dbReference type="PRINTS" id="PR00985">
    <property type="entry name" value="TRNASYNTHLEU"/>
</dbReference>
<dbReference type="SUPFAM" id="SSF47323">
    <property type="entry name" value="Anticodon-binding domain of a subclass of class I aminoacyl-tRNA synthetases"/>
    <property type="match status" value="1"/>
</dbReference>
<dbReference type="SUPFAM" id="SSF52374">
    <property type="entry name" value="Nucleotidylyl transferase"/>
    <property type="match status" value="1"/>
</dbReference>
<dbReference type="SUPFAM" id="SSF50677">
    <property type="entry name" value="ValRS/IleRS/LeuRS editing domain"/>
    <property type="match status" value="1"/>
</dbReference>
<dbReference type="PROSITE" id="PS00178">
    <property type="entry name" value="AA_TRNA_LIGASE_I"/>
    <property type="match status" value="1"/>
</dbReference>
<protein>
    <recommendedName>
        <fullName evidence="1">Leucine--tRNA ligase</fullName>
        <ecNumber evidence="1">6.1.1.4</ecNumber>
    </recommendedName>
    <alternativeName>
        <fullName evidence="1">Leucyl-tRNA synthetase</fullName>
        <shortName evidence="1">LeuRS</shortName>
    </alternativeName>
</protein>
<evidence type="ECO:0000255" key="1">
    <source>
        <dbReference type="HAMAP-Rule" id="MF_00049"/>
    </source>
</evidence>
<sequence length="808" mass="92689">MAYDHKSIEAKWQKYWDEHETFRAPDKSEKEKYYVMDMFPYPSGQGLHVGHPEGYTATDIMSRYKRAKGFNVLHPMGWDAFGLPAEQYAIKTGNNPAGFTNKNVQVFKNQIKSLGFSIDWSREINTTDPEYYKWSQWIFEKLYEKGLAYEDEIMVNWAPDFPGGGIVVANEEVIDGKTERGGYPVYRKPMKQWVLRITAYADRLLEDLEDLDWPEAIKEQQRHWIGKSIGASVFFNIADSDKQIEVYTTRPDTLFGAQYMVLSPEHELVDEITTLEQKEAIANYKKEVETKSDLERTDLNKDKTGAFTGAYATNPINGEKLPIWIADYVLSSYGTGAIMAVPAHDDRDWEFAKKFNLPIKAVIEGGNVEEAAYTDDGTHINSGFLDGLNKQEAIDKAISWLEEHNAGHQQINYRLRDWIFSRQRYWGEPIPVIHWEDGTQTLVPESELPLRLPEMTQEQLKPSGTGESPLANATDWLNVTRKDGVKGRRETNTMPQWAGSSWYFLRYVDPHNSEALADPEKLKYWMNVDLYVGGAEHAVLHLLYARFWHKFLYDLGVVPTKEPFQKLVNQGMILGENHEKMSKSKGNVVNPDEIVNNYGADTLRVYEMFMGPLTQSKPWSEDGVSGSRRWLDRVWRLLVDEEDKLRDHVTTVNKGDLDKIYHQTVKKVSEDLENMRFNTAISQLMVFVNEAYKSEALPVQYMDGFVQMLAPIAPHLAEELWSKLGHEEDISYVSWPTYDESQLVEDSVEIIFQVNGKVRGKATVARNIDKDAMLDYAKADENVQNFISGKEIRKIIAIPGKFVNIVVG</sequence>
<keyword id="KW-0030">Aminoacyl-tRNA synthetase</keyword>
<keyword id="KW-0067">ATP-binding</keyword>
<keyword id="KW-0963">Cytoplasm</keyword>
<keyword id="KW-0436">Ligase</keyword>
<keyword id="KW-0547">Nucleotide-binding</keyword>
<keyword id="KW-0648">Protein biosynthesis</keyword>
<keyword id="KW-1185">Reference proteome</keyword>
<comment type="catalytic activity">
    <reaction evidence="1">
        <text>tRNA(Leu) + L-leucine + ATP = L-leucyl-tRNA(Leu) + AMP + diphosphate</text>
        <dbReference type="Rhea" id="RHEA:11688"/>
        <dbReference type="Rhea" id="RHEA-COMP:9613"/>
        <dbReference type="Rhea" id="RHEA-COMP:9622"/>
        <dbReference type="ChEBI" id="CHEBI:30616"/>
        <dbReference type="ChEBI" id="CHEBI:33019"/>
        <dbReference type="ChEBI" id="CHEBI:57427"/>
        <dbReference type="ChEBI" id="CHEBI:78442"/>
        <dbReference type="ChEBI" id="CHEBI:78494"/>
        <dbReference type="ChEBI" id="CHEBI:456215"/>
        <dbReference type="EC" id="6.1.1.4"/>
    </reaction>
</comment>
<comment type="subcellular location">
    <subcellularLocation>
        <location evidence="1">Cytoplasm</location>
    </subcellularLocation>
</comment>
<comment type="similarity">
    <text evidence="1">Belongs to the class-I aminoacyl-tRNA synthetase family.</text>
</comment>
<organism>
    <name type="scientific">Leuconostoc mesenteroides subsp. mesenteroides (strain ATCC 8293 / DSM 20343 / BCRC 11652 / CCM 1803 / JCM 6124 / NCDO 523 / NBRC 100496 / NCIMB 8023 / NCTC 12954 / NRRL B-1118 / 37Y)</name>
    <dbReference type="NCBI Taxonomy" id="203120"/>
    <lineage>
        <taxon>Bacteria</taxon>
        <taxon>Bacillati</taxon>
        <taxon>Bacillota</taxon>
        <taxon>Bacilli</taxon>
        <taxon>Lactobacillales</taxon>
        <taxon>Lactobacillaceae</taxon>
        <taxon>Leuconostoc</taxon>
    </lineage>
</organism>
<name>SYL_LEUMM</name>
<accession>Q03YH4</accession>
<reference key="1">
    <citation type="journal article" date="2006" name="Proc. Natl. Acad. Sci. U.S.A.">
        <title>Comparative genomics of the lactic acid bacteria.</title>
        <authorList>
            <person name="Makarova K.S."/>
            <person name="Slesarev A."/>
            <person name="Wolf Y.I."/>
            <person name="Sorokin A."/>
            <person name="Mirkin B."/>
            <person name="Koonin E.V."/>
            <person name="Pavlov A."/>
            <person name="Pavlova N."/>
            <person name="Karamychev V."/>
            <person name="Polouchine N."/>
            <person name="Shakhova V."/>
            <person name="Grigoriev I."/>
            <person name="Lou Y."/>
            <person name="Rohksar D."/>
            <person name="Lucas S."/>
            <person name="Huang K."/>
            <person name="Goodstein D.M."/>
            <person name="Hawkins T."/>
            <person name="Plengvidhya V."/>
            <person name="Welker D."/>
            <person name="Hughes J."/>
            <person name="Goh Y."/>
            <person name="Benson A."/>
            <person name="Baldwin K."/>
            <person name="Lee J.-H."/>
            <person name="Diaz-Muniz I."/>
            <person name="Dosti B."/>
            <person name="Smeianov V."/>
            <person name="Wechter W."/>
            <person name="Barabote R."/>
            <person name="Lorca G."/>
            <person name="Altermann E."/>
            <person name="Barrangou R."/>
            <person name="Ganesan B."/>
            <person name="Xie Y."/>
            <person name="Rawsthorne H."/>
            <person name="Tamir D."/>
            <person name="Parker C."/>
            <person name="Breidt F."/>
            <person name="Broadbent J.R."/>
            <person name="Hutkins R."/>
            <person name="O'Sullivan D."/>
            <person name="Steele J."/>
            <person name="Unlu G."/>
            <person name="Saier M.H. Jr."/>
            <person name="Klaenhammer T."/>
            <person name="Richardson P."/>
            <person name="Kozyavkin S."/>
            <person name="Weimer B.C."/>
            <person name="Mills D.A."/>
        </authorList>
    </citation>
    <scope>NUCLEOTIDE SEQUENCE [LARGE SCALE GENOMIC DNA]</scope>
    <source>
        <strain>ATCC 8293 / DSM 20343 / BCRC 11652 / CCM 1803 / JCM 6124 / NCDO 523 / NBRC 100496 / NCIMB 8023 / NCTC 12954 / NRRL B-1118 / 37Y</strain>
    </source>
</reference>
<feature type="chain" id="PRO_1000009366" description="Leucine--tRNA ligase">
    <location>
        <begin position="1"/>
        <end position="808"/>
    </location>
</feature>
<feature type="short sequence motif" description="'HIGH' region">
    <location>
        <begin position="40"/>
        <end position="51"/>
    </location>
</feature>
<feature type="short sequence motif" description="'KMSKS' region">
    <location>
        <begin position="580"/>
        <end position="584"/>
    </location>
</feature>
<feature type="binding site" evidence="1">
    <location>
        <position position="583"/>
    </location>
    <ligand>
        <name>ATP</name>
        <dbReference type="ChEBI" id="CHEBI:30616"/>
    </ligand>
</feature>